<accession>Q5NPH0</accession>
<feature type="chain" id="PRO_0000231700" description="Bifunctional uridylyltransferase/uridylyl-removing enzyme">
    <location>
        <begin position="1"/>
        <end position="926"/>
    </location>
</feature>
<feature type="domain" description="HD" evidence="2">
    <location>
        <begin position="496"/>
        <end position="618"/>
    </location>
</feature>
<feature type="domain" description="ACT 1" evidence="1">
    <location>
        <begin position="737"/>
        <end position="814"/>
    </location>
</feature>
<feature type="domain" description="ACT 2" evidence="1">
    <location>
        <begin position="849"/>
        <end position="926"/>
    </location>
</feature>
<feature type="region of interest" description="Uridylyltransferase">
    <location>
        <begin position="1"/>
        <end position="379"/>
    </location>
</feature>
<feature type="region of interest" description="Uridylyl-removing">
    <location>
        <begin position="380"/>
        <end position="736"/>
    </location>
</feature>
<proteinExistence type="inferred from homology"/>
<organism>
    <name type="scientific">Zymomonas mobilis subsp. mobilis (strain ATCC 31821 / ZM4 / CP4)</name>
    <dbReference type="NCBI Taxonomy" id="264203"/>
    <lineage>
        <taxon>Bacteria</taxon>
        <taxon>Pseudomonadati</taxon>
        <taxon>Pseudomonadota</taxon>
        <taxon>Alphaproteobacteria</taxon>
        <taxon>Sphingomonadales</taxon>
        <taxon>Zymomonadaceae</taxon>
        <taxon>Zymomonas</taxon>
    </lineage>
</organism>
<protein>
    <recommendedName>
        <fullName evidence="1">Bifunctional uridylyltransferase/uridylyl-removing enzyme</fullName>
        <shortName evidence="1">UTase/UR</shortName>
    </recommendedName>
    <alternativeName>
        <fullName evidence="1">Bifunctional [protein-PII] modification enzyme</fullName>
    </alternativeName>
    <alternativeName>
        <fullName evidence="1">Bifunctional nitrogen sensor protein</fullName>
    </alternativeName>
    <domain>
        <recommendedName>
            <fullName evidence="1">[Protein-PII] uridylyltransferase</fullName>
            <shortName evidence="1">PII uridylyltransferase</shortName>
            <shortName evidence="1">UTase</shortName>
            <ecNumber evidence="1">2.7.7.59</ecNumber>
        </recommendedName>
    </domain>
    <domain>
        <recommendedName>
            <fullName evidence="1">[Protein-PII]-UMP uridylyl-removing enzyme</fullName>
            <shortName evidence="1">UR</shortName>
            <ecNumber evidence="1">3.1.4.-</ecNumber>
        </recommendedName>
    </domain>
</protein>
<dbReference type="EC" id="2.7.7.59" evidence="1"/>
<dbReference type="EC" id="3.1.4.-" evidence="1"/>
<dbReference type="EMBL" id="AE008692">
    <property type="protein sequence ID" value="AAV89390.1"/>
    <property type="molecule type" value="Genomic_DNA"/>
</dbReference>
<dbReference type="RefSeq" id="WP_011240644.1">
    <property type="nucleotide sequence ID" value="NZ_CP035711.1"/>
</dbReference>
<dbReference type="SMR" id="Q5NPH0"/>
<dbReference type="STRING" id="264203.ZMO0766"/>
<dbReference type="KEGG" id="zmo:ZMO0766"/>
<dbReference type="eggNOG" id="COG2844">
    <property type="taxonomic scope" value="Bacteria"/>
</dbReference>
<dbReference type="HOGENOM" id="CLU_012833_1_0_5"/>
<dbReference type="Proteomes" id="UP000001173">
    <property type="component" value="Chromosome"/>
</dbReference>
<dbReference type="GO" id="GO:0008773">
    <property type="term" value="F:[protein-PII] uridylyltransferase activity"/>
    <property type="evidence" value="ECO:0007669"/>
    <property type="project" value="UniProtKB-UniRule"/>
</dbReference>
<dbReference type="GO" id="GO:0008081">
    <property type="term" value="F:phosphoric diester hydrolase activity"/>
    <property type="evidence" value="ECO:0007669"/>
    <property type="project" value="UniProtKB-UniRule"/>
</dbReference>
<dbReference type="GO" id="GO:0006808">
    <property type="term" value="P:regulation of nitrogen utilization"/>
    <property type="evidence" value="ECO:0007669"/>
    <property type="project" value="UniProtKB-UniRule"/>
</dbReference>
<dbReference type="CDD" id="cd04899">
    <property type="entry name" value="ACT_ACR-UUR-like_2"/>
    <property type="match status" value="1"/>
</dbReference>
<dbReference type="CDD" id="cd04900">
    <property type="entry name" value="ACT_UUR-like_1"/>
    <property type="match status" value="1"/>
</dbReference>
<dbReference type="CDD" id="cd00077">
    <property type="entry name" value="HDc"/>
    <property type="match status" value="1"/>
</dbReference>
<dbReference type="CDD" id="cd05401">
    <property type="entry name" value="NT_GlnE_GlnD_like"/>
    <property type="match status" value="1"/>
</dbReference>
<dbReference type="Gene3D" id="3.30.70.260">
    <property type="match status" value="1"/>
</dbReference>
<dbReference type="Gene3D" id="1.10.3090.10">
    <property type="entry name" value="cca-adding enzyme, domain 2"/>
    <property type="match status" value="1"/>
</dbReference>
<dbReference type="Gene3D" id="1.20.120.330">
    <property type="entry name" value="Nucleotidyltransferases domain 2"/>
    <property type="match status" value="1"/>
</dbReference>
<dbReference type="HAMAP" id="MF_00277">
    <property type="entry name" value="PII_uridylyl_transf"/>
    <property type="match status" value="1"/>
</dbReference>
<dbReference type="InterPro" id="IPR045865">
    <property type="entry name" value="ACT-like_dom_sf"/>
</dbReference>
<dbReference type="InterPro" id="IPR002912">
    <property type="entry name" value="ACT_dom"/>
</dbReference>
<dbReference type="InterPro" id="IPR003607">
    <property type="entry name" value="HD/PDEase_dom"/>
</dbReference>
<dbReference type="InterPro" id="IPR006674">
    <property type="entry name" value="HD_domain"/>
</dbReference>
<dbReference type="InterPro" id="IPR043519">
    <property type="entry name" value="NT_sf"/>
</dbReference>
<dbReference type="InterPro" id="IPR013546">
    <property type="entry name" value="PII_UdlTrfase/GS_AdlTrfase"/>
</dbReference>
<dbReference type="InterPro" id="IPR010043">
    <property type="entry name" value="UTase/UR"/>
</dbReference>
<dbReference type="NCBIfam" id="NF003467">
    <property type="entry name" value="PRK05092.1"/>
    <property type="match status" value="1"/>
</dbReference>
<dbReference type="NCBIfam" id="TIGR01693">
    <property type="entry name" value="UTase_glnD"/>
    <property type="match status" value="1"/>
</dbReference>
<dbReference type="PANTHER" id="PTHR47320">
    <property type="entry name" value="BIFUNCTIONAL URIDYLYLTRANSFERASE/URIDYLYL-REMOVING ENZYME"/>
    <property type="match status" value="1"/>
</dbReference>
<dbReference type="PANTHER" id="PTHR47320:SF1">
    <property type="entry name" value="BIFUNCTIONAL URIDYLYLTRANSFERASE_URIDYLYL-REMOVING ENZYME"/>
    <property type="match status" value="1"/>
</dbReference>
<dbReference type="Pfam" id="PF08335">
    <property type="entry name" value="GlnD_UR_UTase"/>
    <property type="match status" value="1"/>
</dbReference>
<dbReference type="Pfam" id="PF01966">
    <property type="entry name" value="HD"/>
    <property type="match status" value="1"/>
</dbReference>
<dbReference type="PIRSF" id="PIRSF006288">
    <property type="entry name" value="PII_uridyltransf"/>
    <property type="match status" value="1"/>
</dbReference>
<dbReference type="SMART" id="SM00471">
    <property type="entry name" value="HDc"/>
    <property type="match status" value="1"/>
</dbReference>
<dbReference type="SUPFAM" id="SSF55021">
    <property type="entry name" value="ACT-like"/>
    <property type="match status" value="2"/>
</dbReference>
<dbReference type="SUPFAM" id="SSF109604">
    <property type="entry name" value="HD-domain/PDEase-like"/>
    <property type="match status" value="1"/>
</dbReference>
<dbReference type="SUPFAM" id="SSF81301">
    <property type="entry name" value="Nucleotidyltransferase"/>
    <property type="match status" value="1"/>
</dbReference>
<dbReference type="SUPFAM" id="SSF81593">
    <property type="entry name" value="Nucleotidyltransferase substrate binding subunit/domain"/>
    <property type="match status" value="1"/>
</dbReference>
<dbReference type="PROSITE" id="PS51671">
    <property type="entry name" value="ACT"/>
    <property type="match status" value="2"/>
</dbReference>
<dbReference type="PROSITE" id="PS51831">
    <property type="entry name" value="HD"/>
    <property type="match status" value="1"/>
</dbReference>
<keyword id="KW-0378">Hydrolase</keyword>
<keyword id="KW-0460">Magnesium</keyword>
<keyword id="KW-0511">Multifunctional enzyme</keyword>
<keyword id="KW-0548">Nucleotidyltransferase</keyword>
<keyword id="KW-1185">Reference proteome</keyword>
<keyword id="KW-0677">Repeat</keyword>
<keyword id="KW-0808">Transferase</keyword>
<gene>
    <name evidence="1" type="primary">glnD</name>
    <name type="ordered locus">ZMO0766</name>
</gene>
<sequence length="926" mass="104393">MPVSFLSLASQPQIIDYPAIKEEIDSIKKVAAGDPVSEYRAVSLVLKQTVLKGREVIAEALTRRPHQGRIAALSYAYLTDQIIQLALYAMVGDDEKATDNLVILAVGGYGRGEMALHSDVDIAFLSRRSPRKAQKKLIESLISLLWDVGLRVSQSHRSLSDMVKMAKKDITIRTALLESRYLVGDKALFEEASTRFIQKVVAGSGRDFVAAKLLEWDERHLARGDSRYLVEPHLKEGKGGLRDLQSLFWIAKYLYLEKEARHTVLTSPILTDYALVKADLIAGHEAKRFRRCENFLWAVRCHLHILVKRPEERLNFDVQRSLAEKMGYRSKSGKSAVERFMHHYFLVTKMVGNLAALFIDALKVNHYLKPKSRRSGASKQIDGFPVIQGEIVLDDDFFFRHNPAALITLFAVAYRHRLDIHPLTLRQAGRDARLIDEALQNNPVCNAAFLTLFTLPYNPAPILKIMNNTGVLGRFIPDFGRIVAQMQFDMYHHYTVDEHAIRALDILWQIENNKLEDLYPLGSRLFKQLNARLVLYMALFLHDIAKGREGSHSALGAEIALRLCPRFGLTAAETKLVAWLVKNHLLMSHTAFQRDLADAKTITDFANAVKSPERLRLLYLLTVADISAVGPHIWNSWKNQLLTSLYEACSQCLLEGPTGHGAGRQQRIENRQNDVSEKLDWDNDLFHALVKRLPDDYWFSERTDVIAANMQQIIDTDSKGQSISVRGHEMPAYDATMISLYAIDHPGFFYRISGAIHATGGNILDARIHTTRDGMAMDNLLVQNSQGGMIKSGEHLNRMMQAIEDAATSHIRSSNKLAALRPPLFWRGKAFHVEPLVFIDNQASDRFTVIEVNAQDRPALLHDLGCALFNARLTISSAHIATYGERAVDVFYVSDLFSHKITNQNRLKAIEKRLLAAADAARISEK</sequence>
<reference key="1">
    <citation type="journal article" date="2005" name="Nat. Biotechnol.">
        <title>The genome sequence of the ethanologenic bacterium Zymomonas mobilis ZM4.</title>
        <authorList>
            <person name="Seo J.-S."/>
            <person name="Chong H."/>
            <person name="Park H.S."/>
            <person name="Yoon K.-O."/>
            <person name="Jung C."/>
            <person name="Kim J.J."/>
            <person name="Hong J.H."/>
            <person name="Kim H."/>
            <person name="Kim J.-H."/>
            <person name="Kil J.-I."/>
            <person name="Park C.J."/>
            <person name="Oh H.-M."/>
            <person name="Lee J.-S."/>
            <person name="Jin S.-J."/>
            <person name="Um H.-W."/>
            <person name="Lee H.-J."/>
            <person name="Oh S.-J."/>
            <person name="Kim J.Y."/>
            <person name="Kang H.L."/>
            <person name="Lee S.Y."/>
            <person name="Lee K.J."/>
            <person name="Kang H.S."/>
        </authorList>
    </citation>
    <scope>NUCLEOTIDE SEQUENCE [LARGE SCALE GENOMIC DNA]</scope>
    <source>
        <strain>ATCC 31821 / ZM4 / CP4</strain>
    </source>
</reference>
<evidence type="ECO:0000255" key="1">
    <source>
        <dbReference type="HAMAP-Rule" id="MF_00277"/>
    </source>
</evidence>
<evidence type="ECO:0000255" key="2">
    <source>
        <dbReference type="PROSITE-ProRule" id="PRU01175"/>
    </source>
</evidence>
<name>GLND_ZYMMO</name>
<comment type="function">
    <text evidence="1">Modifies, by uridylylation and deuridylylation, the PII regulatory proteins (GlnB and homologs), in response to the nitrogen status of the cell that GlnD senses through the glutamine level. Under low glutamine levels, catalyzes the conversion of the PII proteins and UTP to PII-UMP and PPi, while under higher glutamine levels, GlnD hydrolyzes PII-UMP to PII and UMP (deuridylylation). Thus, controls uridylylation state and activity of the PII proteins, and plays an important role in the regulation of nitrogen assimilation and metabolism.</text>
</comment>
<comment type="catalytic activity">
    <reaction evidence="1">
        <text>[protein-PII]-L-tyrosine + UTP = [protein-PII]-uridylyl-L-tyrosine + diphosphate</text>
        <dbReference type="Rhea" id="RHEA:13673"/>
        <dbReference type="Rhea" id="RHEA-COMP:12147"/>
        <dbReference type="Rhea" id="RHEA-COMP:12148"/>
        <dbReference type="ChEBI" id="CHEBI:33019"/>
        <dbReference type="ChEBI" id="CHEBI:46398"/>
        <dbReference type="ChEBI" id="CHEBI:46858"/>
        <dbReference type="ChEBI" id="CHEBI:90602"/>
        <dbReference type="EC" id="2.7.7.59"/>
    </reaction>
</comment>
<comment type="catalytic activity">
    <reaction evidence="1">
        <text>[protein-PII]-uridylyl-L-tyrosine + H2O = [protein-PII]-L-tyrosine + UMP + H(+)</text>
        <dbReference type="Rhea" id="RHEA:48600"/>
        <dbReference type="Rhea" id="RHEA-COMP:12147"/>
        <dbReference type="Rhea" id="RHEA-COMP:12148"/>
        <dbReference type="ChEBI" id="CHEBI:15377"/>
        <dbReference type="ChEBI" id="CHEBI:15378"/>
        <dbReference type="ChEBI" id="CHEBI:46858"/>
        <dbReference type="ChEBI" id="CHEBI:57865"/>
        <dbReference type="ChEBI" id="CHEBI:90602"/>
    </reaction>
</comment>
<comment type="cofactor">
    <cofactor evidence="1">
        <name>Mg(2+)</name>
        <dbReference type="ChEBI" id="CHEBI:18420"/>
    </cofactor>
</comment>
<comment type="activity regulation">
    <text evidence="1">Uridylyltransferase (UTase) activity is inhibited by glutamine, while glutamine activates uridylyl-removing (UR) activity.</text>
</comment>
<comment type="domain">
    <text evidence="1">Has four distinct domains: an N-terminal nucleotidyltransferase (NT) domain responsible for UTase activity, a central HD domain that encodes UR activity, and two C-terminal ACT domains that seem to have a role in glutamine sensing.</text>
</comment>
<comment type="similarity">
    <text evidence="1">Belongs to the GlnD family.</text>
</comment>